<dbReference type="EC" id="2.1.3.15" evidence="1"/>
<dbReference type="EMBL" id="CP000908">
    <property type="protein sequence ID" value="ABY32813.1"/>
    <property type="molecule type" value="Genomic_DNA"/>
</dbReference>
<dbReference type="RefSeq" id="WP_003603557.1">
    <property type="nucleotide sequence ID" value="NC_010172.1"/>
</dbReference>
<dbReference type="SMR" id="A9VWE8"/>
<dbReference type="GeneID" id="72992179"/>
<dbReference type="KEGG" id="mex:Mext_4445"/>
<dbReference type="eggNOG" id="COG0777">
    <property type="taxonomic scope" value="Bacteria"/>
</dbReference>
<dbReference type="HOGENOM" id="CLU_015486_1_0_5"/>
<dbReference type="BioCyc" id="MEXT419610:MEXT_RS22340-MONOMER"/>
<dbReference type="UniPathway" id="UPA00655">
    <property type="reaction ID" value="UER00711"/>
</dbReference>
<dbReference type="GO" id="GO:0009329">
    <property type="term" value="C:acetate CoA-transferase complex"/>
    <property type="evidence" value="ECO:0007669"/>
    <property type="project" value="TreeGrafter"/>
</dbReference>
<dbReference type="GO" id="GO:0003989">
    <property type="term" value="F:acetyl-CoA carboxylase activity"/>
    <property type="evidence" value="ECO:0007669"/>
    <property type="project" value="InterPro"/>
</dbReference>
<dbReference type="GO" id="GO:0005524">
    <property type="term" value="F:ATP binding"/>
    <property type="evidence" value="ECO:0007669"/>
    <property type="project" value="UniProtKB-KW"/>
</dbReference>
<dbReference type="GO" id="GO:0016743">
    <property type="term" value="F:carboxyl- or carbamoyltransferase activity"/>
    <property type="evidence" value="ECO:0007669"/>
    <property type="project" value="UniProtKB-UniRule"/>
</dbReference>
<dbReference type="GO" id="GO:0006633">
    <property type="term" value="P:fatty acid biosynthetic process"/>
    <property type="evidence" value="ECO:0007669"/>
    <property type="project" value="UniProtKB-KW"/>
</dbReference>
<dbReference type="GO" id="GO:2001295">
    <property type="term" value="P:malonyl-CoA biosynthetic process"/>
    <property type="evidence" value="ECO:0007669"/>
    <property type="project" value="UniProtKB-UniRule"/>
</dbReference>
<dbReference type="Gene3D" id="3.90.226.10">
    <property type="entry name" value="2-enoyl-CoA Hydratase, Chain A, domain 1"/>
    <property type="match status" value="1"/>
</dbReference>
<dbReference type="HAMAP" id="MF_01395">
    <property type="entry name" value="AcetylCoA_CT_beta"/>
    <property type="match status" value="1"/>
</dbReference>
<dbReference type="InterPro" id="IPR034733">
    <property type="entry name" value="AcCoA_carboxyl_beta"/>
</dbReference>
<dbReference type="InterPro" id="IPR000438">
    <property type="entry name" value="Acetyl_CoA_COase_Trfase_b_su"/>
</dbReference>
<dbReference type="InterPro" id="IPR029045">
    <property type="entry name" value="ClpP/crotonase-like_dom_sf"/>
</dbReference>
<dbReference type="InterPro" id="IPR011762">
    <property type="entry name" value="COA_CT_N"/>
</dbReference>
<dbReference type="NCBIfam" id="TIGR00515">
    <property type="entry name" value="accD"/>
    <property type="match status" value="1"/>
</dbReference>
<dbReference type="PANTHER" id="PTHR42995">
    <property type="entry name" value="ACETYL-COENZYME A CARBOXYLASE CARBOXYL TRANSFERASE SUBUNIT BETA, CHLOROPLASTIC"/>
    <property type="match status" value="1"/>
</dbReference>
<dbReference type="PANTHER" id="PTHR42995:SF5">
    <property type="entry name" value="ACETYL-COENZYME A CARBOXYLASE CARBOXYL TRANSFERASE SUBUNIT BETA, CHLOROPLASTIC"/>
    <property type="match status" value="1"/>
</dbReference>
<dbReference type="Pfam" id="PF01039">
    <property type="entry name" value="Carboxyl_trans"/>
    <property type="match status" value="1"/>
</dbReference>
<dbReference type="PRINTS" id="PR01070">
    <property type="entry name" value="ACCCTRFRASEB"/>
</dbReference>
<dbReference type="SUPFAM" id="SSF52096">
    <property type="entry name" value="ClpP/crotonase"/>
    <property type="match status" value="1"/>
</dbReference>
<dbReference type="PROSITE" id="PS50980">
    <property type="entry name" value="COA_CT_NTER"/>
    <property type="match status" value="1"/>
</dbReference>
<gene>
    <name evidence="1" type="primary">accD</name>
    <name type="ordered locus">Mext_4445</name>
</gene>
<feature type="chain" id="PRO_0000389796" description="Acetyl-coenzyme A carboxylase carboxyl transferase subunit beta">
    <location>
        <begin position="1"/>
        <end position="307"/>
    </location>
</feature>
<feature type="domain" description="CoA carboxyltransferase N-terminal" evidence="2">
    <location>
        <begin position="28"/>
        <end position="297"/>
    </location>
</feature>
<feature type="region of interest" description="Disordered" evidence="3">
    <location>
        <begin position="286"/>
        <end position="307"/>
    </location>
</feature>
<feature type="compositionally biased region" description="Pro residues" evidence="3">
    <location>
        <begin position="292"/>
        <end position="307"/>
    </location>
</feature>
<protein>
    <recommendedName>
        <fullName evidence="1">Acetyl-coenzyme A carboxylase carboxyl transferase subunit beta</fullName>
        <shortName evidence="1">ACCase subunit beta</shortName>
        <shortName evidence="1">Acetyl-CoA carboxylase carboxyltransferase subunit beta</shortName>
        <ecNumber evidence="1">2.1.3.15</ecNumber>
    </recommendedName>
</protein>
<keyword id="KW-0067">ATP-binding</keyword>
<keyword id="KW-0963">Cytoplasm</keyword>
<keyword id="KW-0275">Fatty acid biosynthesis</keyword>
<keyword id="KW-0276">Fatty acid metabolism</keyword>
<keyword id="KW-0444">Lipid biosynthesis</keyword>
<keyword id="KW-0443">Lipid metabolism</keyword>
<keyword id="KW-0547">Nucleotide-binding</keyword>
<keyword id="KW-0808">Transferase</keyword>
<name>ACCD_METEP</name>
<reference key="1">
    <citation type="submission" date="2007-12" db="EMBL/GenBank/DDBJ databases">
        <title>Complete sequence of Methylobacterium extorquens PA1.</title>
        <authorList>
            <consortium name="US DOE Joint Genome Institute"/>
            <person name="Copeland A."/>
            <person name="Lucas S."/>
            <person name="Lapidus A."/>
            <person name="Barry K."/>
            <person name="Glavina del Rio T."/>
            <person name="Dalin E."/>
            <person name="Tice H."/>
            <person name="Pitluck S."/>
            <person name="Saunders E."/>
            <person name="Brettin T."/>
            <person name="Bruce D."/>
            <person name="Detter J.C."/>
            <person name="Han C."/>
            <person name="Schmutz J."/>
            <person name="Larimer F."/>
            <person name="Land M."/>
            <person name="Hauser L."/>
            <person name="Kyrpides N."/>
            <person name="Kim E."/>
            <person name="Marx C."/>
            <person name="Richardson P."/>
        </authorList>
    </citation>
    <scope>NUCLEOTIDE SEQUENCE [LARGE SCALE GENOMIC DNA]</scope>
    <source>
        <strain>PA1</strain>
    </source>
</reference>
<accession>A9VWE8</accession>
<sequence>MVEPMNWISEVVRPRIKTLFKRETPENLWVKCPDTGQMVFHKEVEQNHWVIPGSEHHLKMSATARLKMMFDEGTWIDVPLPEVPADPLKFRDEKRYVDRLKEARAKTGMPDAFKIGFGRVGSLPMTIAAQEFGFMAGSLGMAGGEAFVRGAETALEKRTPYVLFAASGGARMQEGILSLMQMPRTTVAVRRLRAARLPYIVVLTNPTTGGVTASYAMLGDVHLAEPGALICFAGPRVIEQTIREKLPDGFQRAEYLREHGMVDQVVHRHQLKETISRLCGLLMDVRRTPEPGTAPEPTTPEPLPNAA</sequence>
<evidence type="ECO:0000255" key="1">
    <source>
        <dbReference type="HAMAP-Rule" id="MF_01395"/>
    </source>
</evidence>
<evidence type="ECO:0000255" key="2">
    <source>
        <dbReference type="PROSITE-ProRule" id="PRU01136"/>
    </source>
</evidence>
<evidence type="ECO:0000256" key="3">
    <source>
        <dbReference type="SAM" id="MobiDB-lite"/>
    </source>
</evidence>
<proteinExistence type="inferred from homology"/>
<organism>
    <name type="scientific">Methylorubrum extorquens (strain PA1)</name>
    <name type="common">Methylobacterium extorquens</name>
    <dbReference type="NCBI Taxonomy" id="419610"/>
    <lineage>
        <taxon>Bacteria</taxon>
        <taxon>Pseudomonadati</taxon>
        <taxon>Pseudomonadota</taxon>
        <taxon>Alphaproteobacteria</taxon>
        <taxon>Hyphomicrobiales</taxon>
        <taxon>Methylobacteriaceae</taxon>
        <taxon>Methylorubrum</taxon>
    </lineage>
</organism>
<comment type="function">
    <text evidence="1">Component of the acetyl coenzyme A carboxylase (ACC) complex. Biotin carboxylase (BC) catalyzes the carboxylation of biotin on its carrier protein (BCCP) and then the CO(2) group is transferred by the transcarboxylase to acetyl-CoA to form malonyl-CoA.</text>
</comment>
<comment type="catalytic activity">
    <reaction evidence="1">
        <text>N(6)-carboxybiotinyl-L-lysyl-[protein] + acetyl-CoA = N(6)-biotinyl-L-lysyl-[protein] + malonyl-CoA</text>
        <dbReference type="Rhea" id="RHEA:54728"/>
        <dbReference type="Rhea" id="RHEA-COMP:10505"/>
        <dbReference type="Rhea" id="RHEA-COMP:10506"/>
        <dbReference type="ChEBI" id="CHEBI:57288"/>
        <dbReference type="ChEBI" id="CHEBI:57384"/>
        <dbReference type="ChEBI" id="CHEBI:83144"/>
        <dbReference type="ChEBI" id="CHEBI:83145"/>
        <dbReference type="EC" id="2.1.3.15"/>
    </reaction>
</comment>
<comment type="pathway">
    <text evidence="1">Lipid metabolism; malonyl-CoA biosynthesis; malonyl-CoA from acetyl-CoA: step 1/1.</text>
</comment>
<comment type="subunit">
    <text evidence="1">Acetyl-CoA carboxylase is a heterohexamer composed of biotin carboxyl carrier protein (AccB), biotin carboxylase (AccC) and two subunits each of ACCase subunit alpha (AccA) and ACCase subunit beta (AccD).</text>
</comment>
<comment type="subcellular location">
    <subcellularLocation>
        <location evidence="1">Cytoplasm</location>
    </subcellularLocation>
</comment>
<comment type="similarity">
    <text evidence="1">Belongs to the AccD/PCCB family.</text>
</comment>